<keyword id="KW-1185">Reference proteome</keyword>
<feature type="chain" id="PRO_0000427582" description="Uncharacterized protein MT3896">
    <location>
        <begin position="1"/>
        <end position="161"/>
    </location>
</feature>
<name>Y3788_MYCTO</name>
<gene>
    <name type="ordered locus">MT3896</name>
</gene>
<dbReference type="EMBL" id="AE000516">
    <property type="protein sequence ID" value="AAK48261.1"/>
    <property type="molecule type" value="Genomic_DNA"/>
</dbReference>
<dbReference type="PIR" id="H70696">
    <property type="entry name" value="H70696"/>
</dbReference>
<dbReference type="RefSeq" id="WP_003420624.1">
    <property type="nucleotide sequence ID" value="NZ_KK341227.1"/>
</dbReference>
<dbReference type="SMR" id="P9WKW6"/>
<dbReference type="KEGG" id="mtc:MT3896"/>
<dbReference type="PATRIC" id="fig|83331.31.peg.4191"/>
<dbReference type="HOGENOM" id="CLU_101379_4_0_11"/>
<dbReference type="Proteomes" id="UP000001020">
    <property type="component" value="Chromosome"/>
</dbReference>
<dbReference type="GO" id="GO:0003677">
    <property type="term" value="F:DNA binding"/>
    <property type="evidence" value="ECO:0007669"/>
    <property type="project" value="InterPro"/>
</dbReference>
<dbReference type="GO" id="GO:0070063">
    <property type="term" value="F:RNA polymerase binding"/>
    <property type="evidence" value="ECO:0007669"/>
    <property type="project" value="InterPro"/>
</dbReference>
<dbReference type="GO" id="GO:0006354">
    <property type="term" value="P:DNA-templated transcription elongation"/>
    <property type="evidence" value="ECO:0007669"/>
    <property type="project" value="TreeGrafter"/>
</dbReference>
<dbReference type="GO" id="GO:0032784">
    <property type="term" value="P:regulation of DNA-templated transcription elongation"/>
    <property type="evidence" value="ECO:0007669"/>
    <property type="project" value="InterPro"/>
</dbReference>
<dbReference type="FunFam" id="3.10.50.30:FF:000006">
    <property type="entry name" value="Nucleoside diphosphate kinase regulator"/>
    <property type="match status" value="1"/>
</dbReference>
<dbReference type="Gene3D" id="3.10.50.30">
    <property type="entry name" value="Transcription elongation factor, GreA/GreB, C-terminal domain"/>
    <property type="match status" value="1"/>
</dbReference>
<dbReference type="InterPro" id="IPR036953">
    <property type="entry name" value="GreA/GreB_C_sf"/>
</dbReference>
<dbReference type="InterPro" id="IPR001437">
    <property type="entry name" value="Tscrpt_elong_fac_GreA/B_C"/>
</dbReference>
<dbReference type="InterPro" id="IPR023459">
    <property type="entry name" value="Tscrpt_elong_fac_GreA/B_fam"/>
</dbReference>
<dbReference type="NCBIfam" id="NF004548">
    <property type="entry name" value="PRK05892.1"/>
    <property type="match status" value="1"/>
</dbReference>
<dbReference type="PANTHER" id="PTHR30437">
    <property type="entry name" value="TRANSCRIPTION ELONGATION FACTOR GREA"/>
    <property type="match status" value="1"/>
</dbReference>
<dbReference type="PANTHER" id="PTHR30437:SF4">
    <property type="entry name" value="TRANSCRIPTION ELONGATION FACTOR GREA"/>
    <property type="match status" value="1"/>
</dbReference>
<dbReference type="Pfam" id="PF01272">
    <property type="entry name" value="GreA_GreB"/>
    <property type="match status" value="1"/>
</dbReference>
<dbReference type="PIRSF" id="PIRSF006092">
    <property type="entry name" value="GreA_GreB"/>
    <property type="match status" value="1"/>
</dbReference>
<dbReference type="SUPFAM" id="SSF54534">
    <property type="entry name" value="FKBP-like"/>
    <property type="match status" value="1"/>
</dbReference>
<organism>
    <name type="scientific">Mycobacterium tuberculosis (strain CDC 1551 / Oshkosh)</name>
    <dbReference type="NCBI Taxonomy" id="83331"/>
    <lineage>
        <taxon>Bacteria</taxon>
        <taxon>Bacillati</taxon>
        <taxon>Actinomycetota</taxon>
        <taxon>Actinomycetes</taxon>
        <taxon>Mycobacteriales</taxon>
        <taxon>Mycobacteriaceae</taxon>
        <taxon>Mycobacterium</taxon>
        <taxon>Mycobacterium tuberculosis complex</taxon>
    </lineage>
</organism>
<proteinExistence type="predicted"/>
<reference key="1">
    <citation type="journal article" date="2002" name="J. Bacteriol.">
        <title>Whole-genome comparison of Mycobacterium tuberculosis clinical and laboratory strains.</title>
        <authorList>
            <person name="Fleischmann R.D."/>
            <person name="Alland D."/>
            <person name="Eisen J.A."/>
            <person name="Carpenter L."/>
            <person name="White O."/>
            <person name="Peterson J.D."/>
            <person name="DeBoy R.T."/>
            <person name="Dodson R.J."/>
            <person name="Gwinn M.L."/>
            <person name="Haft D.H."/>
            <person name="Hickey E.K."/>
            <person name="Kolonay J.F."/>
            <person name="Nelson W.C."/>
            <person name="Umayam L.A."/>
            <person name="Ermolaeva M.D."/>
            <person name="Salzberg S.L."/>
            <person name="Delcher A."/>
            <person name="Utterback T.R."/>
            <person name="Weidman J.F."/>
            <person name="Khouri H.M."/>
            <person name="Gill J."/>
            <person name="Mikula A."/>
            <person name="Bishai W."/>
            <person name="Jacobs W.R. Jr."/>
            <person name="Venter J.C."/>
            <person name="Fraser C.M."/>
        </authorList>
    </citation>
    <scope>NUCLEOTIDE SEQUENCE [LARGE SCALE GENOMIC DNA]</scope>
    <source>
        <strain>CDC 1551 / Oshkosh</strain>
    </source>
</reference>
<sequence length="161" mass="17406">MSEKVESKGLADAARDHLAAELARLRQRRDRLEVEVKNDRGMIGDHGDAAEAIQRADELAILGDRINELDRRLRTGPTPWSGSETLPGGTEVTLRFPDGEVVTMHVISVVEETPVGREAETLTARSPLGQALAGHQPGDTVTYSTPQGPNQVQLLAVKLPS</sequence>
<protein>
    <recommendedName>
        <fullName>Uncharacterized protein MT3896</fullName>
    </recommendedName>
</protein>
<accession>P9WKW6</accession>
<accession>L0TF93</accession>
<accession>P65095</accession>
<accession>P72054</accession>